<comment type="function">
    <text evidence="1">Plays an essential role in type IV pili and type II pseudopili formation by proteolytically removing the leader sequence from substrate proteins and subsequently monomethylating the alpha-amino group of the newly exposed N-terminal phenylalanine.</text>
</comment>
<comment type="catalytic activity">
    <reaction evidence="1">
        <text>Typically cleaves a -Gly-|-Phe- bond to release an N-terminal, basic peptide of 5-8 residues from type IV prepilin, and then N-methylates the new N-terminal amino group, the methyl donor being S-adenosyl-L-methionine.</text>
        <dbReference type="EC" id="3.4.23.43"/>
    </reaction>
</comment>
<comment type="cofactor">
    <cofactor evidence="1">
        <name>Zn(2+)</name>
        <dbReference type="ChEBI" id="CHEBI:29105"/>
    </cofactor>
    <text evidence="1">Zinc is required for the N-terminal methylation of the mature pilin, but not for signal peptide cleavage.</text>
</comment>
<comment type="subcellular location">
    <subcellularLocation>
        <location evidence="1">Cell inner membrane</location>
        <topology evidence="1">Multi-pass membrane protein</topology>
    </subcellularLocation>
</comment>
<comment type="similarity">
    <text evidence="3">Belongs to the peptidase A24 family.</text>
</comment>
<gene>
    <name type="primary">gspO</name>
    <name type="ordered locus">BPSL3010</name>
</gene>
<sequence>MPTASMTPNPFLSGSPEHAAAAGPLAAFAALPTGMQLAFAIVLGLVVGSFINVVVHRLPIMMKRAWLAEIAEATGAPCADDGLPARYNLCVPRSACPHCGHALRAWENVPVLSYIALRGRCRHCRTPIGARYPLIELASGALAAGALALFGPSGAALAAFGLCAALLAMSAIDMQTGFLPDSLTLPLLWAGLCVNLWGTFASLRAAVIGAIAGYLFLWCILWLFKLLRGIEGIGYGDLKLLAALGAWLGWEALPQVVLIAAVAGAAVGLVATWRGRMRFEEPLPFGPFLAAGGAATLFFGTPFYLLLGG</sequence>
<organism>
    <name type="scientific">Burkholderia pseudomallei (strain K96243)</name>
    <dbReference type="NCBI Taxonomy" id="272560"/>
    <lineage>
        <taxon>Bacteria</taxon>
        <taxon>Pseudomonadati</taxon>
        <taxon>Pseudomonadota</taxon>
        <taxon>Betaproteobacteria</taxon>
        <taxon>Burkholderiales</taxon>
        <taxon>Burkholderiaceae</taxon>
        <taxon>Burkholderia</taxon>
        <taxon>pseudomallei group</taxon>
    </lineage>
</organism>
<accession>P0DMK9</accession>
<accession>Q63QL3</accession>
<accession>Q9ZF70</accession>
<feature type="chain" id="PRO_0000192618" description="Prepilin leader peptidase/N-methyltransferase">
    <location>
        <begin position="1"/>
        <end position="309"/>
    </location>
</feature>
<feature type="transmembrane region" description="Helical" evidence="2">
    <location>
        <begin position="35"/>
        <end position="55"/>
    </location>
</feature>
<feature type="transmembrane region" description="Helical" evidence="2">
    <location>
        <begin position="147"/>
        <end position="167"/>
    </location>
</feature>
<feature type="transmembrane region" description="Helical" evidence="2">
    <location>
        <begin position="183"/>
        <end position="203"/>
    </location>
</feature>
<feature type="transmembrane region" description="Helical" evidence="2">
    <location>
        <begin position="207"/>
        <end position="227"/>
    </location>
</feature>
<feature type="transmembrane region" description="Helical" evidence="2">
    <location>
        <begin position="230"/>
        <end position="250"/>
    </location>
</feature>
<feature type="transmembrane region" description="Helical" evidence="2">
    <location>
        <begin position="253"/>
        <end position="273"/>
    </location>
</feature>
<feature type="transmembrane region" description="Helical" evidence="2">
    <location>
        <begin position="288"/>
        <end position="308"/>
    </location>
</feature>
<feature type="binding site" evidence="1">
    <location>
        <position position="96"/>
    </location>
    <ligand>
        <name>Zn(2+)</name>
        <dbReference type="ChEBI" id="CHEBI:29105"/>
    </ligand>
</feature>
<feature type="binding site" evidence="1">
    <location>
        <position position="99"/>
    </location>
    <ligand>
        <name>Zn(2+)</name>
        <dbReference type="ChEBI" id="CHEBI:29105"/>
    </ligand>
</feature>
<feature type="binding site" evidence="1">
    <location>
        <position position="121"/>
    </location>
    <ligand>
        <name>Zn(2+)</name>
        <dbReference type="ChEBI" id="CHEBI:29105"/>
    </ligand>
</feature>
<feature type="binding site" evidence="1">
    <location>
        <position position="124"/>
    </location>
    <ligand>
        <name>Zn(2+)</name>
        <dbReference type="ChEBI" id="CHEBI:29105"/>
    </ligand>
</feature>
<reference key="1">
    <citation type="journal article" date="2004" name="Proc. Natl. Acad. Sci. U.S.A.">
        <title>Genomic plasticity of the causative agent of melioidosis, Burkholderia pseudomallei.</title>
        <authorList>
            <person name="Holden M.T.G."/>
            <person name="Titball R.W."/>
            <person name="Peacock S.J."/>
            <person name="Cerdeno-Tarraga A.-M."/>
            <person name="Atkins T."/>
            <person name="Crossman L.C."/>
            <person name="Pitt T."/>
            <person name="Churcher C."/>
            <person name="Mungall K.L."/>
            <person name="Bentley S.D."/>
            <person name="Sebaihia M."/>
            <person name="Thomson N.R."/>
            <person name="Bason N."/>
            <person name="Beacham I.R."/>
            <person name="Brooks K."/>
            <person name="Brown K.A."/>
            <person name="Brown N.F."/>
            <person name="Challis G.L."/>
            <person name="Cherevach I."/>
            <person name="Chillingworth T."/>
            <person name="Cronin A."/>
            <person name="Crossett B."/>
            <person name="Davis P."/>
            <person name="DeShazer D."/>
            <person name="Feltwell T."/>
            <person name="Fraser A."/>
            <person name="Hance Z."/>
            <person name="Hauser H."/>
            <person name="Holroyd S."/>
            <person name="Jagels K."/>
            <person name="Keith K.E."/>
            <person name="Maddison M."/>
            <person name="Moule S."/>
            <person name="Price C."/>
            <person name="Quail M.A."/>
            <person name="Rabbinowitsch E."/>
            <person name="Rutherford K."/>
            <person name="Sanders M."/>
            <person name="Simmonds M."/>
            <person name="Songsivilai S."/>
            <person name="Stevens K."/>
            <person name="Tumapa S."/>
            <person name="Vesaratchavest M."/>
            <person name="Whitehead S."/>
            <person name="Yeats C."/>
            <person name="Barrell B.G."/>
            <person name="Oyston P.C.F."/>
            <person name="Parkhill J."/>
        </authorList>
    </citation>
    <scope>NUCLEOTIDE SEQUENCE [LARGE SCALE GENOMIC DNA]</scope>
    <source>
        <strain>K96243</strain>
    </source>
</reference>
<keyword id="KW-0997">Cell inner membrane</keyword>
<keyword id="KW-1003">Cell membrane</keyword>
<keyword id="KW-0378">Hydrolase</keyword>
<keyword id="KW-0472">Membrane</keyword>
<keyword id="KW-0479">Metal-binding</keyword>
<keyword id="KW-0489">Methyltransferase</keyword>
<keyword id="KW-0511">Multifunctional enzyme</keyword>
<keyword id="KW-0645">Protease</keyword>
<keyword id="KW-1185">Reference proteome</keyword>
<keyword id="KW-0949">S-adenosyl-L-methionine</keyword>
<keyword id="KW-0808">Transferase</keyword>
<keyword id="KW-0812">Transmembrane</keyword>
<keyword id="KW-1133">Transmembrane helix</keyword>
<keyword id="KW-0862">Zinc</keyword>
<proteinExistence type="inferred from homology"/>
<protein>
    <recommendedName>
        <fullName>Prepilin leader peptidase/N-methyltransferase</fullName>
    </recommendedName>
    <domain>
        <recommendedName>
            <fullName>Leader peptidase</fullName>
            <ecNumber evidence="1">3.4.23.43</ecNumber>
        </recommendedName>
        <alternativeName>
            <fullName>Prepilin peptidase</fullName>
        </alternativeName>
    </domain>
    <domain>
        <recommendedName>
            <fullName>N-methyltransferase</fullName>
            <ecNumber evidence="1">2.1.1.-</ecNumber>
        </recommendedName>
    </domain>
</protein>
<name>LEP4_BURPS</name>
<evidence type="ECO:0000250" key="1">
    <source>
        <dbReference type="UniProtKB" id="P22610"/>
    </source>
</evidence>
<evidence type="ECO:0000255" key="2"/>
<evidence type="ECO:0000305" key="3"/>
<dbReference type="EC" id="3.4.23.43" evidence="1"/>
<dbReference type="EC" id="2.1.1.-" evidence="1"/>
<dbReference type="EMBL" id="BX571965">
    <property type="protein sequence ID" value="CAH37021.1"/>
    <property type="molecule type" value="Genomic_DNA"/>
</dbReference>
<dbReference type="RefSeq" id="YP_109605.1">
    <property type="nucleotide sequence ID" value="NC_006350.1"/>
</dbReference>
<dbReference type="STRING" id="272560.BPSL3010"/>
<dbReference type="MEROPS" id="A24.A10"/>
<dbReference type="KEGG" id="bps:BPSL3010"/>
<dbReference type="PATRIC" id="fig|272560.6.peg.3439"/>
<dbReference type="eggNOG" id="COG1989">
    <property type="taxonomic scope" value="Bacteria"/>
</dbReference>
<dbReference type="Proteomes" id="UP000000605">
    <property type="component" value="Chromosome 1"/>
</dbReference>
<dbReference type="GO" id="GO:0005886">
    <property type="term" value="C:plasma membrane"/>
    <property type="evidence" value="ECO:0007669"/>
    <property type="project" value="UniProtKB-SubCell"/>
</dbReference>
<dbReference type="GO" id="GO:0004190">
    <property type="term" value="F:aspartic-type endopeptidase activity"/>
    <property type="evidence" value="ECO:0007669"/>
    <property type="project" value="UniProtKB-EC"/>
</dbReference>
<dbReference type="GO" id="GO:0046872">
    <property type="term" value="F:metal ion binding"/>
    <property type="evidence" value="ECO:0007669"/>
    <property type="project" value="UniProtKB-KW"/>
</dbReference>
<dbReference type="GO" id="GO:0008168">
    <property type="term" value="F:methyltransferase activity"/>
    <property type="evidence" value="ECO:0007669"/>
    <property type="project" value="UniProtKB-KW"/>
</dbReference>
<dbReference type="GO" id="GO:0032259">
    <property type="term" value="P:methylation"/>
    <property type="evidence" value="ECO:0007669"/>
    <property type="project" value="UniProtKB-KW"/>
</dbReference>
<dbReference type="GO" id="GO:0006465">
    <property type="term" value="P:signal peptide processing"/>
    <property type="evidence" value="ECO:0007669"/>
    <property type="project" value="TreeGrafter"/>
</dbReference>
<dbReference type="Gene3D" id="1.20.120.1220">
    <property type="match status" value="1"/>
</dbReference>
<dbReference type="InterPro" id="IPR014032">
    <property type="entry name" value="Peptidase_A24A_bac"/>
</dbReference>
<dbReference type="InterPro" id="IPR000045">
    <property type="entry name" value="Prepilin_IV_endopep_pep"/>
</dbReference>
<dbReference type="InterPro" id="IPR010627">
    <property type="entry name" value="Prepilin_pept_A24_N"/>
</dbReference>
<dbReference type="InterPro" id="IPR050882">
    <property type="entry name" value="Prepilin_peptidase/N-MTase"/>
</dbReference>
<dbReference type="PANTHER" id="PTHR30487:SF0">
    <property type="entry name" value="PREPILIN LEADER PEPTIDASE_N-METHYLTRANSFERASE-RELATED"/>
    <property type="match status" value="1"/>
</dbReference>
<dbReference type="PANTHER" id="PTHR30487">
    <property type="entry name" value="TYPE 4 PREPILIN-LIKE PROTEINS LEADER PEPTIDE-PROCESSING ENZYME"/>
    <property type="match status" value="1"/>
</dbReference>
<dbReference type="Pfam" id="PF06750">
    <property type="entry name" value="A24_N_bact"/>
    <property type="match status" value="1"/>
</dbReference>
<dbReference type="Pfam" id="PF01478">
    <property type="entry name" value="Peptidase_A24"/>
    <property type="match status" value="1"/>
</dbReference>
<dbReference type="PRINTS" id="PR00864">
    <property type="entry name" value="PREPILNPTASE"/>
</dbReference>